<evidence type="ECO:0000250" key="1"/>
<evidence type="ECO:0000250" key="2">
    <source>
        <dbReference type="UniProtKB" id="P06280"/>
    </source>
</evidence>
<evidence type="ECO:0000250" key="3">
    <source>
        <dbReference type="UniProtKB" id="P17050"/>
    </source>
</evidence>
<evidence type="ECO:0000250" key="4">
    <source>
        <dbReference type="UniProtKB" id="Q8RX86"/>
    </source>
</evidence>
<evidence type="ECO:0000250" key="5">
    <source>
        <dbReference type="UniProtKB" id="Q9FXT4"/>
    </source>
</evidence>
<evidence type="ECO:0000255" key="6"/>
<evidence type="ECO:0000255" key="7">
    <source>
        <dbReference type="PROSITE-ProRule" id="PRU00498"/>
    </source>
</evidence>
<evidence type="ECO:0000303" key="8">
    <source>
    </source>
</evidence>
<evidence type="ECO:0000305" key="9"/>
<evidence type="ECO:0000305" key="10">
    <source>
    </source>
</evidence>
<evidence type="ECO:0000312" key="11">
    <source>
        <dbReference type="Araport" id="AT3G56310"/>
    </source>
</evidence>
<evidence type="ECO:0000312" key="12">
    <source>
        <dbReference type="EMBL" id="AAL67017.1"/>
    </source>
</evidence>
<evidence type="ECO:0000312" key="13">
    <source>
        <dbReference type="EMBL" id="CAB87430.1"/>
    </source>
</evidence>
<accession>Q8VXZ7</accession>
<accession>F4IZE4</accession>
<accession>Q9LYL2</accession>
<organism evidence="12">
    <name type="scientific">Arabidopsis thaliana</name>
    <name type="common">Mouse-ear cress</name>
    <dbReference type="NCBI Taxonomy" id="3702"/>
    <lineage>
        <taxon>Eukaryota</taxon>
        <taxon>Viridiplantae</taxon>
        <taxon>Streptophyta</taxon>
        <taxon>Embryophyta</taxon>
        <taxon>Tracheophyta</taxon>
        <taxon>Spermatophyta</taxon>
        <taxon>Magnoliopsida</taxon>
        <taxon>eudicotyledons</taxon>
        <taxon>Gunneridae</taxon>
        <taxon>Pentapetalae</taxon>
        <taxon>rosids</taxon>
        <taxon>malvids</taxon>
        <taxon>Brassicales</taxon>
        <taxon>Brassicaceae</taxon>
        <taxon>Camelineae</taxon>
        <taxon>Arabidopsis</taxon>
    </lineage>
</organism>
<protein>
    <recommendedName>
        <fullName evidence="8">Alpha-galactosidase 3</fullName>
        <shortName evidence="8">AtAGAL3</shortName>
        <ecNumber evidence="5">3.2.1.22</ecNumber>
    </recommendedName>
    <alternativeName>
        <fullName evidence="9">Alpha-D-galactoside galactohydrolase 3</fullName>
    </alternativeName>
    <alternativeName>
        <fullName evidence="9">Melibiase</fullName>
    </alternativeName>
</protein>
<keyword id="KW-0025">Alternative splicing</keyword>
<keyword id="KW-0052">Apoplast</keyword>
<keyword id="KW-0134">Cell wall</keyword>
<keyword id="KW-0961">Cell wall biogenesis/degradation</keyword>
<keyword id="KW-1015">Disulfide bond</keyword>
<keyword id="KW-0325">Glycoprotein</keyword>
<keyword id="KW-0326">Glycosidase</keyword>
<keyword id="KW-0378">Hydrolase</keyword>
<keyword id="KW-1185">Reference proteome</keyword>
<keyword id="KW-0964">Secreted</keyword>
<keyword id="KW-0732">Signal</keyword>
<keyword id="KW-0926">Vacuole</keyword>
<gene>
    <name evidence="8" type="primary">AGAL3</name>
    <name evidence="11" type="ordered locus">At3g56310</name>
    <name evidence="13" type="ORF">F18O21.270</name>
</gene>
<feature type="signal peptide" evidence="6">
    <location>
        <begin position="1"/>
        <end position="30"/>
    </location>
</feature>
<feature type="chain" id="PRO_0000431847" description="Alpha-galactosidase 3" evidence="6">
    <location>
        <begin position="31"/>
        <end position="437"/>
    </location>
</feature>
<feature type="active site" description="Nucleophile" evidence="3">
    <location>
        <position position="193"/>
    </location>
</feature>
<feature type="active site" description="Proton donor" evidence="3">
    <location>
        <position position="248"/>
    </location>
</feature>
<feature type="binding site" evidence="3">
    <location>
        <begin position="115"/>
        <end position="116"/>
    </location>
    <ligand>
        <name>substrate</name>
    </ligand>
</feature>
<feature type="binding site" evidence="3">
    <location>
        <position position="191"/>
    </location>
    <ligand>
        <name>substrate</name>
    </ligand>
</feature>
<feature type="binding site" evidence="1">
    <location>
        <begin position="226"/>
        <end position="230"/>
    </location>
    <ligand>
        <name>substrate</name>
    </ligand>
</feature>
<feature type="binding site" evidence="3">
    <location>
        <position position="244"/>
    </location>
    <ligand>
        <name>substrate</name>
    </ligand>
</feature>
<feature type="binding site" evidence="3">
    <location>
        <position position="248"/>
    </location>
    <ligand>
        <name>substrate</name>
    </ligand>
</feature>
<feature type="glycosylation site" description="N-linked (GlcNAc...) asparagine" evidence="7">
    <location>
        <position position="88"/>
    </location>
</feature>
<feature type="glycosylation site" description="N-linked (GlcNAc...) asparagine" evidence="7">
    <location>
        <position position="214"/>
    </location>
</feature>
<feature type="glycosylation site" description="N-linked (GlcNAc...) asparagine" evidence="7">
    <location>
        <position position="250"/>
    </location>
</feature>
<feature type="glycosylation site" description="N-linked (GlcNAc...) asparagine" evidence="7">
    <location>
        <position position="315"/>
    </location>
</feature>
<feature type="glycosylation site" description="N-linked (GlcNAc...) asparagine" evidence="7">
    <location>
        <position position="408"/>
    </location>
</feature>
<feature type="disulfide bond" evidence="2">
    <location>
        <begin position="85"/>
        <end position="117"/>
    </location>
</feature>
<feature type="disulfide bond" evidence="2">
    <location>
        <begin position="165"/>
        <end position="195"/>
    </location>
</feature>
<feature type="splice variant" id="VSP_057450" description="In isoform 2.">
    <location>
        <begin position="115"/>
        <end position="138"/>
    </location>
</feature>
<name>AGAL3_ARATH</name>
<proteinExistence type="evidence at protein level"/>
<comment type="function">
    <text evidence="4">May regulate leaf (and possibly other organ) development by functioning in cell wall loosening and cell wall expansion.</text>
</comment>
<comment type="catalytic activity">
    <reaction evidence="5">
        <text>Hydrolysis of terminal, non-reducing alpha-D-galactose residues in alpha-D-galactosides, including galactose oligosaccharides, galactomannans and galactolipids.</text>
        <dbReference type="EC" id="3.2.1.22"/>
    </reaction>
</comment>
<comment type="subunit">
    <text evidence="2">Homodimer.</text>
</comment>
<comment type="subcellular location">
    <subcellularLocation>
        <location evidence="4">Secreted</location>
        <location evidence="4">Cell wall</location>
    </subcellularLocation>
    <subcellularLocation>
        <location evidence="4">Secreted</location>
        <location evidence="4">Extracellular space</location>
        <location evidence="4">Apoplast</location>
    </subcellularLocation>
    <subcellularLocation>
        <location evidence="10">Vacuole</location>
    </subcellularLocation>
</comment>
<comment type="alternative products">
    <event type="alternative splicing"/>
    <isoform>
        <id>Q8VXZ7-1</id>
        <name>1</name>
        <sequence type="displayed"/>
    </isoform>
    <isoform>
        <id>Q8VXZ7-2</id>
        <name>2</name>
        <sequence type="described" ref="VSP_057450"/>
    </isoform>
</comment>
<comment type="induction">
    <text evidence="10">May be processed or degraded in a VPEgamma-dependent manner in vacuoles.</text>
</comment>
<comment type="similarity">
    <text evidence="9">Belongs to the glycosyl hydrolase 27 family.</text>
</comment>
<comment type="sequence caution" evidence="9">
    <conflict type="erroneous initiation">
        <sequence resource="EMBL-CDS" id="CAB87430"/>
    </conflict>
    <text>Truncated N-terminus.</text>
</comment>
<sequence length="437" mass="48363">MVIMKKMKDSVLFLVVGLFSLSVLVSQSIAGRVKAPLLQSNTGGLVFSKSFNSIYDTSMYGRLQLNNGLARTPQMGWNSWNFFACNINETVIKETADALVSSGLADLGYIHVNIDDCWSNLLRDSEGQLVPHPETFPSGIKLLADYVHSKGLKLGIYSDAGVFTCEVHPGSLFHEVDDADIFASWGVDYLKYDNCFNLGIKPIERYPPMRDALNATGRSIFYSLCEWGVDDPALWAKEVGNSWRTTDDINDTWASMTTIADLNNKWAAYAGPGGWNDPDMLEIGNGGMTYEEYRGHFSIWALMKAPLLIGCDVRNMTAETLEILSNKEIIAVNQDPLGVQGRKIQANGENDCQQVWSGPLSGDRMVVALWNRCSEPATITASWDMIGLESTISVSVRDLWQHKDVTENTSGSFEAQVDAHDCHMYVLTPQTVSHSDV</sequence>
<dbReference type="EC" id="3.2.1.22" evidence="5"/>
<dbReference type="EMBL" id="AL163763">
    <property type="protein sequence ID" value="CAB87430.1"/>
    <property type="status" value="ALT_INIT"/>
    <property type="molecule type" value="Genomic_DNA"/>
</dbReference>
<dbReference type="EMBL" id="CP002686">
    <property type="protein sequence ID" value="AEE79507.1"/>
    <property type="molecule type" value="Genomic_DNA"/>
</dbReference>
<dbReference type="EMBL" id="CP002686">
    <property type="protein sequence ID" value="AEE79508.1"/>
    <property type="molecule type" value="Genomic_DNA"/>
</dbReference>
<dbReference type="EMBL" id="AY074321">
    <property type="protein sequence ID" value="AAL67017.1"/>
    <property type="molecule type" value="mRNA"/>
</dbReference>
<dbReference type="EMBL" id="AY114020">
    <property type="protein sequence ID" value="AAM45068.1"/>
    <property type="molecule type" value="mRNA"/>
</dbReference>
<dbReference type="PIR" id="T47748">
    <property type="entry name" value="T47748"/>
</dbReference>
<dbReference type="RefSeq" id="NP_191190.2">
    <molecule id="Q8VXZ7-1"/>
    <property type="nucleotide sequence ID" value="NM_115489.6"/>
</dbReference>
<dbReference type="RefSeq" id="NP_974447.1">
    <molecule id="Q8VXZ7-2"/>
    <property type="nucleotide sequence ID" value="NM_202718.2"/>
</dbReference>
<dbReference type="SMR" id="Q8VXZ7"/>
<dbReference type="FunCoup" id="Q8VXZ7">
    <property type="interactions" value="3098"/>
</dbReference>
<dbReference type="STRING" id="3702.Q8VXZ7"/>
<dbReference type="CAZy" id="GH27">
    <property type="family name" value="Glycoside Hydrolase Family 27"/>
</dbReference>
<dbReference type="GlyCosmos" id="Q8VXZ7">
    <property type="glycosylation" value="5 sites, No reported glycans"/>
</dbReference>
<dbReference type="GlyGen" id="Q8VXZ7">
    <property type="glycosylation" value="5 sites"/>
</dbReference>
<dbReference type="PaxDb" id="3702-AT3G56310.1"/>
<dbReference type="ProteomicsDB" id="244880">
    <molecule id="Q8VXZ7-1"/>
</dbReference>
<dbReference type="EnsemblPlants" id="AT3G56310.1">
    <molecule id="Q8VXZ7-1"/>
    <property type="protein sequence ID" value="AT3G56310.1"/>
    <property type="gene ID" value="AT3G56310"/>
</dbReference>
<dbReference type="EnsemblPlants" id="AT3G56310.2">
    <molecule id="Q8VXZ7-2"/>
    <property type="protein sequence ID" value="AT3G56310.2"/>
    <property type="gene ID" value="AT3G56310"/>
</dbReference>
<dbReference type="GeneID" id="824798"/>
<dbReference type="Gramene" id="AT3G56310.1">
    <molecule id="Q8VXZ7-1"/>
    <property type="protein sequence ID" value="AT3G56310.1"/>
    <property type="gene ID" value="AT3G56310"/>
</dbReference>
<dbReference type="Gramene" id="AT3G56310.2">
    <molecule id="Q8VXZ7-2"/>
    <property type="protein sequence ID" value="AT3G56310.2"/>
    <property type="gene ID" value="AT3G56310"/>
</dbReference>
<dbReference type="KEGG" id="ath:AT3G56310"/>
<dbReference type="Araport" id="AT3G56310"/>
<dbReference type="TAIR" id="AT3G56310">
    <property type="gene designation" value="AGAL3"/>
</dbReference>
<dbReference type="eggNOG" id="KOG2366">
    <property type="taxonomic scope" value="Eukaryota"/>
</dbReference>
<dbReference type="HOGENOM" id="CLU_013093_2_2_1"/>
<dbReference type="InParanoid" id="Q8VXZ7"/>
<dbReference type="OMA" id="DRYPPMR"/>
<dbReference type="PhylomeDB" id="Q8VXZ7"/>
<dbReference type="BioCyc" id="ARA:AT3G56310-MONOMER"/>
<dbReference type="PRO" id="PR:Q8VXZ7"/>
<dbReference type="Proteomes" id="UP000006548">
    <property type="component" value="Chromosome 3"/>
</dbReference>
<dbReference type="ExpressionAtlas" id="Q8VXZ7">
    <property type="expression patterns" value="baseline and differential"/>
</dbReference>
<dbReference type="GO" id="GO:0048046">
    <property type="term" value="C:apoplast"/>
    <property type="evidence" value="ECO:0007669"/>
    <property type="project" value="UniProtKB-SubCell"/>
</dbReference>
<dbReference type="GO" id="GO:0000325">
    <property type="term" value="C:plant-type vacuole"/>
    <property type="evidence" value="ECO:0007005"/>
    <property type="project" value="TAIR"/>
</dbReference>
<dbReference type="GO" id="GO:0099503">
    <property type="term" value="C:secretory vesicle"/>
    <property type="evidence" value="ECO:0007005"/>
    <property type="project" value="TAIR"/>
</dbReference>
<dbReference type="GO" id="GO:0005773">
    <property type="term" value="C:vacuole"/>
    <property type="evidence" value="ECO:0007005"/>
    <property type="project" value="TAIR"/>
</dbReference>
<dbReference type="GO" id="GO:0004557">
    <property type="term" value="F:alpha-galactosidase activity"/>
    <property type="evidence" value="ECO:0000314"/>
    <property type="project" value="TAIR"/>
</dbReference>
<dbReference type="GO" id="GO:0005975">
    <property type="term" value="P:carbohydrate metabolic process"/>
    <property type="evidence" value="ECO:0000314"/>
    <property type="project" value="TAIR"/>
</dbReference>
<dbReference type="GO" id="GO:0071555">
    <property type="term" value="P:cell wall organization"/>
    <property type="evidence" value="ECO:0007669"/>
    <property type="project" value="UniProtKB-KW"/>
</dbReference>
<dbReference type="CDD" id="cd14792">
    <property type="entry name" value="GH27"/>
    <property type="match status" value="1"/>
</dbReference>
<dbReference type="FunFam" id="2.60.40.1180:FF:000008">
    <property type="entry name" value="Alpha-galactosidase"/>
    <property type="match status" value="1"/>
</dbReference>
<dbReference type="FunFam" id="3.20.20.70:FF:000093">
    <property type="entry name" value="Alpha-galactosidase"/>
    <property type="match status" value="1"/>
</dbReference>
<dbReference type="Gene3D" id="3.20.20.70">
    <property type="entry name" value="Aldolase class I"/>
    <property type="match status" value="1"/>
</dbReference>
<dbReference type="Gene3D" id="2.60.40.1180">
    <property type="entry name" value="Golgi alpha-mannosidase II"/>
    <property type="match status" value="1"/>
</dbReference>
<dbReference type="InterPro" id="IPR013785">
    <property type="entry name" value="Aldolase_TIM"/>
</dbReference>
<dbReference type="InterPro" id="IPR002241">
    <property type="entry name" value="Glyco_hydro_27"/>
</dbReference>
<dbReference type="InterPro" id="IPR000111">
    <property type="entry name" value="Glyco_hydro_27/36_CS"/>
</dbReference>
<dbReference type="InterPro" id="IPR013780">
    <property type="entry name" value="Glyco_hydro_b"/>
</dbReference>
<dbReference type="InterPro" id="IPR017853">
    <property type="entry name" value="Glycoside_hydrolase_SF"/>
</dbReference>
<dbReference type="InterPro" id="IPR041233">
    <property type="entry name" value="Melibiase_C"/>
</dbReference>
<dbReference type="PANTHER" id="PTHR11452:SF75">
    <property type="entry name" value="ALPHA-GALACTOSIDASE MEL1"/>
    <property type="match status" value="1"/>
</dbReference>
<dbReference type="PANTHER" id="PTHR11452">
    <property type="entry name" value="ALPHA-GALACTOSIDASE/ALPHA-N-ACETYLGALACTOSAMINIDASE"/>
    <property type="match status" value="1"/>
</dbReference>
<dbReference type="Pfam" id="PF16499">
    <property type="entry name" value="Melibiase_2"/>
    <property type="match status" value="1"/>
</dbReference>
<dbReference type="Pfam" id="PF17801">
    <property type="entry name" value="Melibiase_C"/>
    <property type="match status" value="1"/>
</dbReference>
<dbReference type="PRINTS" id="PR00740">
    <property type="entry name" value="GLHYDRLASE27"/>
</dbReference>
<dbReference type="SUPFAM" id="SSF51445">
    <property type="entry name" value="(Trans)glycosidases"/>
    <property type="match status" value="1"/>
</dbReference>
<dbReference type="SUPFAM" id="SSF51011">
    <property type="entry name" value="Glycosyl hydrolase domain"/>
    <property type="match status" value="1"/>
</dbReference>
<dbReference type="PROSITE" id="PS00512">
    <property type="entry name" value="ALPHA_GALACTOSIDASE"/>
    <property type="match status" value="1"/>
</dbReference>
<reference key="1">
    <citation type="journal article" date="2000" name="Nature">
        <title>Sequence and analysis of chromosome 3 of the plant Arabidopsis thaliana.</title>
        <authorList>
            <person name="Salanoubat M."/>
            <person name="Lemcke K."/>
            <person name="Rieger M."/>
            <person name="Ansorge W."/>
            <person name="Unseld M."/>
            <person name="Fartmann B."/>
            <person name="Valle G."/>
            <person name="Bloecker H."/>
            <person name="Perez-Alonso M."/>
            <person name="Obermaier B."/>
            <person name="Delseny M."/>
            <person name="Boutry M."/>
            <person name="Grivell L.A."/>
            <person name="Mache R."/>
            <person name="Puigdomenech P."/>
            <person name="De Simone V."/>
            <person name="Choisne N."/>
            <person name="Artiguenave F."/>
            <person name="Robert C."/>
            <person name="Brottier P."/>
            <person name="Wincker P."/>
            <person name="Cattolico L."/>
            <person name="Weissenbach J."/>
            <person name="Saurin W."/>
            <person name="Quetier F."/>
            <person name="Schaefer M."/>
            <person name="Mueller-Auer S."/>
            <person name="Gabel C."/>
            <person name="Fuchs M."/>
            <person name="Benes V."/>
            <person name="Wurmbach E."/>
            <person name="Drzonek H."/>
            <person name="Erfle H."/>
            <person name="Jordan N."/>
            <person name="Bangert S."/>
            <person name="Wiedelmann R."/>
            <person name="Kranz H."/>
            <person name="Voss H."/>
            <person name="Holland R."/>
            <person name="Brandt P."/>
            <person name="Nyakatura G."/>
            <person name="Vezzi A."/>
            <person name="D'Angelo M."/>
            <person name="Pallavicini A."/>
            <person name="Toppo S."/>
            <person name="Simionati B."/>
            <person name="Conrad A."/>
            <person name="Hornischer K."/>
            <person name="Kauer G."/>
            <person name="Loehnert T.-H."/>
            <person name="Nordsiek G."/>
            <person name="Reichelt J."/>
            <person name="Scharfe M."/>
            <person name="Schoen O."/>
            <person name="Bargues M."/>
            <person name="Terol J."/>
            <person name="Climent J."/>
            <person name="Navarro P."/>
            <person name="Collado C."/>
            <person name="Perez-Perez A."/>
            <person name="Ottenwaelder B."/>
            <person name="Duchemin D."/>
            <person name="Cooke R."/>
            <person name="Laudie M."/>
            <person name="Berger-Llauro C."/>
            <person name="Purnelle B."/>
            <person name="Masuy D."/>
            <person name="de Haan M."/>
            <person name="Maarse A.C."/>
            <person name="Alcaraz J.-P."/>
            <person name="Cottet A."/>
            <person name="Casacuberta E."/>
            <person name="Monfort A."/>
            <person name="Argiriou A."/>
            <person name="Flores M."/>
            <person name="Liguori R."/>
            <person name="Vitale D."/>
            <person name="Mannhaupt G."/>
            <person name="Haase D."/>
            <person name="Schoof H."/>
            <person name="Rudd S."/>
            <person name="Zaccaria P."/>
            <person name="Mewes H.-W."/>
            <person name="Mayer K.F.X."/>
            <person name="Kaul S."/>
            <person name="Town C.D."/>
            <person name="Koo H.L."/>
            <person name="Tallon L.J."/>
            <person name="Jenkins J."/>
            <person name="Rooney T."/>
            <person name="Rizzo M."/>
            <person name="Walts A."/>
            <person name="Utterback T."/>
            <person name="Fujii C.Y."/>
            <person name="Shea T.P."/>
            <person name="Creasy T.H."/>
            <person name="Haas B."/>
            <person name="Maiti R."/>
            <person name="Wu D."/>
            <person name="Peterson J."/>
            <person name="Van Aken S."/>
            <person name="Pai G."/>
            <person name="Militscher J."/>
            <person name="Sellers P."/>
            <person name="Gill J.E."/>
            <person name="Feldblyum T.V."/>
            <person name="Preuss D."/>
            <person name="Lin X."/>
            <person name="Nierman W.C."/>
            <person name="Salzberg S.L."/>
            <person name="White O."/>
            <person name="Venter J.C."/>
            <person name="Fraser C.M."/>
            <person name="Kaneko T."/>
            <person name="Nakamura Y."/>
            <person name="Sato S."/>
            <person name="Kato T."/>
            <person name="Asamizu E."/>
            <person name="Sasamoto S."/>
            <person name="Kimura T."/>
            <person name="Idesawa K."/>
            <person name="Kawashima K."/>
            <person name="Kishida Y."/>
            <person name="Kiyokawa C."/>
            <person name="Kohara M."/>
            <person name="Matsumoto M."/>
            <person name="Matsuno A."/>
            <person name="Muraki A."/>
            <person name="Nakayama S."/>
            <person name="Nakazaki N."/>
            <person name="Shinpo S."/>
            <person name="Takeuchi C."/>
            <person name="Wada T."/>
            <person name="Watanabe A."/>
            <person name="Yamada M."/>
            <person name="Yasuda M."/>
            <person name="Tabata S."/>
        </authorList>
    </citation>
    <scope>NUCLEOTIDE SEQUENCE [LARGE SCALE GENOMIC DNA]</scope>
    <source>
        <strain>cv. Columbia</strain>
    </source>
</reference>
<reference key="2">
    <citation type="journal article" date="2017" name="Plant J.">
        <title>Araport11: a complete reannotation of the Arabidopsis thaliana reference genome.</title>
        <authorList>
            <person name="Cheng C.Y."/>
            <person name="Krishnakumar V."/>
            <person name="Chan A.P."/>
            <person name="Thibaud-Nissen F."/>
            <person name="Schobel S."/>
            <person name="Town C.D."/>
        </authorList>
    </citation>
    <scope>GENOME REANNOTATION</scope>
    <source>
        <strain>cv. Columbia</strain>
    </source>
</reference>
<reference key="3">
    <citation type="journal article" date="2003" name="Science">
        <title>Empirical analysis of transcriptional activity in the Arabidopsis genome.</title>
        <authorList>
            <person name="Yamada K."/>
            <person name="Lim J."/>
            <person name="Dale J.M."/>
            <person name="Chen H."/>
            <person name="Shinn P."/>
            <person name="Palm C.J."/>
            <person name="Southwick A.M."/>
            <person name="Wu H.C."/>
            <person name="Kim C.J."/>
            <person name="Nguyen M."/>
            <person name="Pham P.K."/>
            <person name="Cheuk R.F."/>
            <person name="Karlin-Newmann G."/>
            <person name="Liu S.X."/>
            <person name="Lam B."/>
            <person name="Sakano H."/>
            <person name="Wu T."/>
            <person name="Yu G."/>
            <person name="Miranda M."/>
            <person name="Quach H.L."/>
            <person name="Tripp M."/>
            <person name="Chang C.H."/>
            <person name="Lee J.M."/>
            <person name="Toriumi M.J."/>
            <person name="Chan M.M."/>
            <person name="Tang C.C."/>
            <person name="Onodera C.S."/>
            <person name="Deng J.M."/>
            <person name="Akiyama K."/>
            <person name="Ansari Y."/>
            <person name="Arakawa T."/>
            <person name="Banh J."/>
            <person name="Banno F."/>
            <person name="Bowser L."/>
            <person name="Brooks S.Y."/>
            <person name="Carninci P."/>
            <person name="Chao Q."/>
            <person name="Choy N."/>
            <person name="Enju A."/>
            <person name="Goldsmith A.D."/>
            <person name="Gurjal M."/>
            <person name="Hansen N.F."/>
            <person name="Hayashizaki Y."/>
            <person name="Johnson-Hopson C."/>
            <person name="Hsuan V.W."/>
            <person name="Iida K."/>
            <person name="Karnes M."/>
            <person name="Khan S."/>
            <person name="Koesema E."/>
            <person name="Ishida J."/>
            <person name="Jiang P.X."/>
            <person name="Jones T."/>
            <person name="Kawai J."/>
            <person name="Kamiya A."/>
            <person name="Meyers C."/>
            <person name="Nakajima M."/>
            <person name="Narusaka M."/>
            <person name="Seki M."/>
            <person name="Sakurai T."/>
            <person name="Satou M."/>
            <person name="Tamse R."/>
            <person name="Vaysberg M."/>
            <person name="Wallender E.K."/>
            <person name="Wong C."/>
            <person name="Yamamura Y."/>
            <person name="Yuan S."/>
            <person name="Shinozaki K."/>
            <person name="Davis R.W."/>
            <person name="Theologis A."/>
            <person name="Ecker J.R."/>
        </authorList>
    </citation>
    <scope>NUCLEOTIDE SEQUENCE [LARGE SCALE MRNA]</scope>
    <source>
        <strain>cv. Columbia</strain>
    </source>
</reference>
<reference key="4">
    <citation type="journal article" date="2003" name="Proc. Natl. Acad. Sci. U.S.A.">
        <title>A unique mechanism for protein processing and degradation in Arabidopsis thaliana.</title>
        <authorList>
            <person name="Rojo E."/>
            <person name="Zouhar J."/>
            <person name="Carter C."/>
            <person name="Kovaleva V."/>
            <person name="Raikhel N.V."/>
        </authorList>
    </citation>
    <scope>INDUCTION</scope>
    <scope>SUBCELLULAR LOCATION</scope>
    <scope>IDENTIFICATION BY MASS SPECTROMETRY</scope>
</reference>
<reference key="5">
    <citation type="journal article" date="2004" name="Plant Physiol.">
        <title>Cloning, functional expression, and characterization of the raffinose oligosaccharide chain elongation enzyme, galactan:galactan galactosyltransferase, from common bugle leaves.</title>
        <authorList>
            <person name="Tapernoux-Luthi E.M."/>
            <person name="Bohm A."/>
            <person name="Keller F."/>
        </authorList>
    </citation>
    <scope>GENE FAMILY</scope>
    <scope>NOMENCLATURE</scope>
</reference>